<reference key="1">
    <citation type="journal article" date="1995" name="J. Mol. Evol.">
        <title>Molecular evolutionary analysis of the YWVZ/7B globin gene cluster of the insect Chironomus thummi.</title>
        <authorList>
            <person name="Trewitt P.M."/>
            <person name="Luhm R.A."/>
            <person name="Samad F."/>
            <person name="Ramakrishnan S."/>
            <person name="Kao W.-Y."/>
            <person name="Bergtrom G."/>
        </authorList>
    </citation>
    <scope>NUCLEOTIDE SEQUENCE [GENOMIC DNA]</scope>
</reference>
<sequence length="163" mass="17789">MKFFAVLALCIVGAIAHPLTSDEAALVKSSWAQVKHNEVDILYTVFKAYPDIQARFPQFAGKDLDTIKTSGQFATHATRIVSFLSELIALSGSESNLSAIYGLISKMGTDHKNRGITQTQFNKFRTALVSYISSNVAWGDNVAAAWTHALDNVYTAVFQIVTA</sequence>
<feature type="signal peptide">
    <location>
        <begin position="1"/>
        <end position="16"/>
    </location>
</feature>
<feature type="chain" id="PRO_0000011210" description="Globin CTT-Z">
    <location>
        <begin position="17"/>
        <end position="163"/>
    </location>
</feature>
<feature type="domain" description="Globin" evidence="1">
    <location>
        <begin position="18"/>
        <end position="162"/>
    </location>
</feature>
<feature type="binding site" description="distal binding residue" evidence="1">
    <location>
        <position position="76"/>
    </location>
    <ligand>
        <name>heme b</name>
        <dbReference type="ChEBI" id="CHEBI:60344"/>
    </ligand>
    <ligandPart>
        <name>Fe</name>
        <dbReference type="ChEBI" id="CHEBI:18248"/>
    </ligandPart>
</feature>
<feature type="binding site" description="proximal binding residue" evidence="1">
    <location>
        <position position="111"/>
    </location>
    <ligand>
        <name>heme b</name>
        <dbReference type="ChEBI" id="CHEBI:60344"/>
    </ligand>
    <ligandPart>
        <name>Fe</name>
        <dbReference type="ChEBI" id="CHEBI:18248"/>
    </ligandPart>
</feature>
<keyword id="KW-0349">Heme</keyword>
<keyword id="KW-0408">Iron</keyword>
<keyword id="KW-0479">Metal-binding</keyword>
<keyword id="KW-0561">Oxygen transport</keyword>
<keyword id="KW-0732">Signal</keyword>
<keyword id="KW-0813">Transport</keyword>
<organism>
    <name type="scientific">Chironomus thummi thummi</name>
    <name type="common">Midge</name>
    <dbReference type="NCBI Taxonomy" id="7155"/>
    <lineage>
        <taxon>Eukaryota</taxon>
        <taxon>Metazoa</taxon>
        <taxon>Ecdysozoa</taxon>
        <taxon>Arthropoda</taxon>
        <taxon>Hexapoda</taxon>
        <taxon>Insecta</taxon>
        <taxon>Pterygota</taxon>
        <taxon>Neoptera</taxon>
        <taxon>Endopterygota</taxon>
        <taxon>Diptera</taxon>
        <taxon>Nematocera</taxon>
        <taxon>Chironomoidea</taxon>
        <taxon>Chironomidae</taxon>
        <taxon>Chironominae</taxon>
        <taxon>Chironomus</taxon>
    </lineage>
</organism>
<dbReference type="EMBL" id="U07703">
    <property type="protein sequence ID" value="AAA85484.1"/>
    <property type="molecule type" value="Genomic_DNA"/>
</dbReference>
<dbReference type="SMR" id="Q23761"/>
<dbReference type="GO" id="GO:0005576">
    <property type="term" value="C:extracellular region"/>
    <property type="evidence" value="ECO:0007669"/>
    <property type="project" value="InterPro"/>
</dbReference>
<dbReference type="GO" id="GO:0005833">
    <property type="term" value="C:hemoglobin complex"/>
    <property type="evidence" value="ECO:0007669"/>
    <property type="project" value="InterPro"/>
</dbReference>
<dbReference type="GO" id="GO:0020037">
    <property type="term" value="F:heme binding"/>
    <property type="evidence" value="ECO:0007669"/>
    <property type="project" value="InterPro"/>
</dbReference>
<dbReference type="GO" id="GO:0046872">
    <property type="term" value="F:metal ion binding"/>
    <property type="evidence" value="ECO:0007669"/>
    <property type="project" value="UniProtKB-KW"/>
</dbReference>
<dbReference type="GO" id="GO:0019825">
    <property type="term" value="F:oxygen binding"/>
    <property type="evidence" value="ECO:0007669"/>
    <property type="project" value="InterPro"/>
</dbReference>
<dbReference type="GO" id="GO:0005344">
    <property type="term" value="F:oxygen carrier activity"/>
    <property type="evidence" value="ECO:0007669"/>
    <property type="project" value="UniProtKB-KW"/>
</dbReference>
<dbReference type="CDD" id="cd01040">
    <property type="entry name" value="Mb-like"/>
    <property type="match status" value="1"/>
</dbReference>
<dbReference type="Gene3D" id="1.10.490.10">
    <property type="entry name" value="Globins"/>
    <property type="match status" value="1"/>
</dbReference>
<dbReference type="InterPro" id="IPR002336">
    <property type="entry name" value="Erythrocruorin"/>
</dbReference>
<dbReference type="InterPro" id="IPR000971">
    <property type="entry name" value="Globin"/>
</dbReference>
<dbReference type="InterPro" id="IPR009050">
    <property type="entry name" value="Globin-like_sf"/>
</dbReference>
<dbReference type="InterPro" id="IPR012292">
    <property type="entry name" value="Globin/Proto"/>
</dbReference>
<dbReference type="InterPro" id="IPR044399">
    <property type="entry name" value="Mb-like_M"/>
</dbReference>
<dbReference type="PANTHER" id="PTHR47217">
    <property type="entry name" value="GLOBIN-LIKE PROTEIN"/>
    <property type="match status" value="1"/>
</dbReference>
<dbReference type="PANTHER" id="PTHR47217:SF1">
    <property type="entry name" value="GLOBIN-LIKE PROTEIN"/>
    <property type="match status" value="1"/>
</dbReference>
<dbReference type="Pfam" id="PF00042">
    <property type="entry name" value="Globin"/>
    <property type="match status" value="1"/>
</dbReference>
<dbReference type="PRINTS" id="PR00611">
    <property type="entry name" value="ERYTHCRUORIN"/>
</dbReference>
<dbReference type="SUPFAM" id="SSF46458">
    <property type="entry name" value="Globin-like"/>
    <property type="match status" value="1"/>
</dbReference>
<dbReference type="PROSITE" id="PS01033">
    <property type="entry name" value="GLOBIN"/>
    <property type="match status" value="1"/>
</dbReference>
<name>GLBZ_CHITH</name>
<accession>Q23761</accession>
<proteinExistence type="inferred from homology"/>
<comment type="miscellaneous">
    <text>There are at least 12 different components in Midge globin.</text>
</comment>
<comment type="similarity">
    <text evidence="1">Belongs to the globin family.</text>
</comment>
<evidence type="ECO:0000255" key="1">
    <source>
        <dbReference type="PROSITE-ProRule" id="PRU00238"/>
    </source>
</evidence>
<protein>
    <recommendedName>
        <fullName>Globin CTT-Z</fullName>
    </recommendedName>
    <alternativeName>
        <fullName>HBZ</fullName>
    </alternativeName>
</protein>
<gene>
    <name type="primary">CTT-Z</name>
</gene>